<proteinExistence type="inferred from homology"/>
<reference key="1">
    <citation type="journal article" date="2008" name="Chem. Biol. Interact.">
        <title>Extending the Bacillus cereus group genomics to putative food-borne pathogens of different toxicity.</title>
        <authorList>
            <person name="Lapidus A."/>
            <person name="Goltsman E."/>
            <person name="Auger S."/>
            <person name="Galleron N."/>
            <person name="Segurens B."/>
            <person name="Dossat C."/>
            <person name="Land M.L."/>
            <person name="Broussolle V."/>
            <person name="Brillard J."/>
            <person name="Guinebretiere M.-H."/>
            <person name="Sanchis V."/>
            <person name="Nguen-the C."/>
            <person name="Lereclus D."/>
            <person name="Richardson P."/>
            <person name="Wincker P."/>
            <person name="Weissenbach J."/>
            <person name="Ehrlich S.D."/>
            <person name="Sorokin A."/>
        </authorList>
    </citation>
    <scope>NUCLEOTIDE SEQUENCE [LARGE SCALE GENOMIC DNA]</scope>
    <source>
        <strain>KBAB4</strain>
    </source>
</reference>
<keyword id="KW-1003">Cell membrane</keyword>
<keyword id="KW-0472">Membrane</keyword>
<keyword id="KW-0812">Transmembrane</keyword>
<keyword id="KW-1133">Transmembrane helix</keyword>
<accession>A9VGI0</accession>
<gene>
    <name type="ordered locus">BcerKBAB4_0766</name>
</gene>
<dbReference type="EMBL" id="CP000903">
    <property type="protein sequence ID" value="ABY42026.1"/>
    <property type="molecule type" value="Genomic_DNA"/>
</dbReference>
<dbReference type="KEGG" id="bwe:BcerKBAB4_0766"/>
<dbReference type="eggNOG" id="COG4399">
    <property type="taxonomic scope" value="Bacteria"/>
</dbReference>
<dbReference type="HOGENOM" id="CLU_042384_0_0_9"/>
<dbReference type="Proteomes" id="UP000002154">
    <property type="component" value="Chromosome"/>
</dbReference>
<dbReference type="GO" id="GO:0005886">
    <property type="term" value="C:plasma membrane"/>
    <property type="evidence" value="ECO:0007669"/>
    <property type="project" value="UniProtKB-SubCell"/>
</dbReference>
<dbReference type="InterPro" id="IPR007383">
    <property type="entry name" value="DUF445"/>
</dbReference>
<dbReference type="InterPro" id="IPR016991">
    <property type="entry name" value="UCP032178"/>
</dbReference>
<dbReference type="PANTHER" id="PTHR35791">
    <property type="entry name" value="UPF0754 MEMBRANE PROTEIN YHEB"/>
    <property type="match status" value="1"/>
</dbReference>
<dbReference type="PANTHER" id="PTHR35791:SF1">
    <property type="entry name" value="UPF0754 MEMBRANE PROTEIN YHEB"/>
    <property type="match status" value="1"/>
</dbReference>
<dbReference type="Pfam" id="PF04286">
    <property type="entry name" value="DUF445"/>
    <property type="match status" value="1"/>
</dbReference>
<dbReference type="PIRSF" id="PIRSF032178">
    <property type="entry name" value="UCP032178"/>
    <property type="match status" value="1"/>
</dbReference>
<feature type="chain" id="PRO_0000388286" description="UPF0754 membrane protein BcerKBAB4_0766">
    <location>
        <begin position="1"/>
        <end position="378"/>
    </location>
</feature>
<feature type="transmembrane region" description="Helical" evidence="2">
    <location>
        <begin position="1"/>
        <end position="21"/>
    </location>
</feature>
<feature type="transmembrane region" description="Helical" evidence="2">
    <location>
        <begin position="357"/>
        <end position="377"/>
    </location>
</feature>
<evidence type="ECO:0000250" key="1"/>
<evidence type="ECO:0000255" key="2"/>
<evidence type="ECO:0000305" key="3"/>
<protein>
    <recommendedName>
        <fullName>UPF0754 membrane protein BcerKBAB4_0766</fullName>
    </recommendedName>
</protein>
<name>Y766_BACMK</name>
<comment type="subcellular location">
    <subcellularLocation>
        <location evidence="1">Cell membrane</location>
        <topology evidence="1">Multi-pass membrane protein</topology>
    </subcellularLocation>
</comment>
<comment type="similarity">
    <text evidence="3">Belongs to the UPF0754 family.</text>
</comment>
<sequence>MNIWLNMLITTGLGAIIGGYTNHLAIKMLFRPHRPIYIGKFQVPFTPGLIPKRRDELAVQLGKMVVDHLLTPEGIGKKLTNKEFQTSLIRWTQVEVDKVITNEQSLRDMLEKWNLEHVEEEAIGKIEHVITEKIHAFLAEYYTYTWEQALPHSVHEKVENAIPNVASFILKRGISFLESEEGKERLSKMIDDFFASRGTLLNLVGMFLGNVSLVDRVQPEVIKFLGQDGTERLLTDVLQKEWEKLKGRDVKELETFVEKEMIVNSILSAVKVEETVSRFLNQSVQQVCEPVRETIVGKVVPSAVEKGLKWGTENVGSILGNLQLAEIVQQEVSTFSTERLEDLVLSITKNELKMITYLGALLGGTIGFIQGLLLLFLK</sequence>
<organism>
    <name type="scientific">Bacillus mycoides (strain KBAB4)</name>
    <name type="common">Bacillus weihenstephanensis</name>
    <dbReference type="NCBI Taxonomy" id="315730"/>
    <lineage>
        <taxon>Bacteria</taxon>
        <taxon>Bacillati</taxon>
        <taxon>Bacillota</taxon>
        <taxon>Bacilli</taxon>
        <taxon>Bacillales</taxon>
        <taxon>Bacillaceae</taxon>
        <taxon>Bacillus</taxon>
        <taxon>Bacillus cereus group</taxon>
    </lineage>
</organism>